<name>DCTMQ_OLEA2</name>
<reference key="1">
    <citation type="journal article" date="2011" name="J. Bacteriol.">
        <title>Complete genome sequence and updated annotation of Desulfovibrio alaskensis G20.</title>
        <authorList>
            <person name="Hauser L.J."/>
            <person name="Land M.L."/>
            <person name="Brown S.D."/>
            <person name="Larimer F."/>
            <person name="Keller K.L."/>
            <person name="Rapp-Giles B.J."/>
            <person name="Price M.N."/>
            <person name="Lin M."/>
            <person name="Bruce D.C."/>
            <person name="Detter J.C."/>
            <person name="Tapia R."/>
            <person name="Han C.S."/>
            <person name="Goodwin L.A."/>
            <person name="Cheng J.F."/>
            <person name="Pitluck S."/>
            <person name="Copeland A."/>
            <person name="Lucas S."/>
            <person name="Nolan M."/>
            <person name="Lapidus A.L."/>
            <person name="Palumbo A.V."/>
            <person name="Wall J.D."/>
        </authorList>
    </citation>
    <scope>NUCLEOTIDE SEQUENCE [LARGE SCALE GENOMIC DNA]</scope>
    <source>
        <strain>ATCC BAA-1058 / DSM 17464 / G20</strain>
    </source>
</reference>
<reference key="2">
    <citation type="journal article" date="2019" name="Proc. Natl. Acad. Sci. U.S.A.">
        <title>A glycyl radical enzyme enables hydrogen sulfide production by the human intestinal bacterium Bilophila wadsworthia.</title>
        <authorList>
            <person name="Peck S.C."/>
            <person name="Denger K."/>
            <person name="Burrichter A."/>
            <person name="Irwin S.M."/>
            <person name="Balskus E.P."/>
            <person name="Schleheck D."/>
        </authorList>
    </citation>
    <scope>FUNCTION</scope>
    <scope>PATHWAY</scope>
    <scope>DISRUPTION PHENOTYPE</scope>
    <scope>SUBUNIT</scope>
    <source>
        <strain>ATCC BAA-1058 / DSM 17464 / G20</strain>
    </source>
</reference>
<proteinExistence type="evidence at protein level"/>
<keyword id="KW-0997">Cell inner membrane</keyword>
<keyword id="KW-1003">Cell membrane</keyword>
<keyword id="KW-0472">Membrane</keyword>
<keyword id="KW-1185">Reference proteome</keyword>
<keyword id="KW-0812">Transmembrane</keyword>
<keyword id="KW-1133">Transmembrane helix</keyword>
<keyword id="KW-0813">Transport</keyword>
<sequence>MSDPNVTATIMNAQGECSSGSLESRPGILGWLDANFEKPFLVAGMLAIIFIITFQTLYRYIGVYLHEGAAAAVWTEEMARFIFIWISYLAVPVAIKNRSSIRVDIIFDRLPVRFQNISWIIVDVCFLTLAATVLWQSLDLIKMQLTYPQTSPALQLPYYIPYLVLPVSFGLMAVRLLQDLAGQVRICGAADTVIGLILCAVLAAPLFIADYIDPLPVLFGYFALFLVVGVPIAIGLGLAALATIVAAGSLPIDYVAQIAFTSIDSFPIMAIPFFIAAGVFMGAGGLSRRLLNLADEMLGALPGGMALATIGTCMFFAAISGSGPATVAAIGSLTIPAMVERGYCKYFSAAIVAAAGAIGVMIPPSNPFVVYGVSAQASIGKLFMGGIVPGLLTGLALMAYSYWYSKKRGWKGEVRDRNLKTFMHAVWEAKWALMVPVIVLGGIYGGIMTPTEAAALAAFYGLIIGCFVHRELSCGSFYDCVVEAAGTSAMVIVLMSMATIFGNIMTIEEVPTTIAQAMLGLTTDKIAILLMINVLLLIIGTFMEALAAIVILTPILLPIVLKVGVDPVHFGIIMVVNLAIGFVTPPVGVNLFVASGVANAKIEQLSKVVLPLIALMLAVLLITTYVPAIPMFFAG</sequence>
<evidence type="ECO:0000255" key="1"/>
<evidence type="ECO:0000269" key="2">
    <source>
    </source>
</evidence>
<evidence type="ECO:0000303" key="3">
    <source>
    </source>
</evidence>
<evidence type="ECO:0000305" key="4"/>
<evidence type="ECO:0000305" key="5">
    <source>
    </source>
</evidence>
<evidence type="ECO:0000312" key="6">
    <source>
        <dbReference type="EMBL" id="ABB38075.1"/>
    </source>
</evidence>
<organism>
    <name type="scientific">Oleidesulfovibrio alaskensis (strain ATCC BAA-1058 / DSM 17464 / G20)</name>
    <name type="common">Desulfovibrio alaskensis</name>
    <dbReference type="NCBI Taxonomy" id="207559"/>
    <lineage>
        <taxon>Bacteria</taxon>
        <taxon>Pseudomonadati</taxon>
        <taxon>Thermodesulfobacteriota</taxon>
        <taxon>Desulfovibrionia</taxon>
        <taxon>Desulfovibrionales</taxon>
        <taxon>Desulfovibrionaceae</taxon>
        <taxon>Oleidesulfovibrio</taxon>
    </lineage>
</organism>
<feature type="chain" id="PRO_0000451053" description="Isethionate TRAP transporter permease protein DctMQ">
    <location>
        <begin position="1"/>
        <end position="635"/>
    </location>
</feature>
<feature type="transmembrane region" description="Helical" evidence="1">
    <location>
        <begin position="38"/>
        <end position="58"/>
    </location>
</feature>
<feature type="transmembrane region" description="Helical" evidence="1">
    <location>
        <begin position="75"/>
        <end position="95"/>
    </location>
</feature>
<feature type="transmembrane region" description="Helical" evidence="1">
    <location>
        <begin position="117"/>
        <end position="137"/>
    </location>
</feature>
<feature type="transmembrane region" description="Helical" evidence="1">
    <location>
        <begin position="154"/>
        <end position="174"/>
    </location>
</feature>
<feature type="transmembrane region" description="Helical" evidence="1">
    <location>
        <begin position="192"/>
        <end position="212"/>
    </location>
</feature>
<feature type="transmembrane region" description="Helical" evidence="1">
    <location>
        <begin position="217"/>
        <end position="237"/>
    </location>
</feature>
<feature type="transmembrane region" description="Helical" evidence="1">
    <location>
        <begin position="266"/>
        <end position="286"/>
    </location>
</feature>
<feature type="transmembrane region" description="Helical" evidence="1">
    <location>
        <begin position="299"/>
        <end position="319"/>
    </location>
</feature>
<feature type="transmembrane region" description="Helical" evidence="1">
    <location>
        <begin position="350"/>
        <end position="370"/>
    </location>
</feature>
<feature type="transmembrane region" description="Helical" evidence="1">
    <location>
        <begin position="379"/>
        <end position="399"/>
    </location>
</feature>
<feature type="transmembrane region" description="Helical" evidence="1">
    <location>
        <begin position="431"/>
        <end position="451"/>
    </location>
</feature>
<feature type="transmembrane region" description="Helical" evidence="1">
    <location>
        <begin position="453"/>
        <end position="473"/>
    </location>
</feature>
<feature type="transmembrane region" description="Helical" evidence="1">
    <location>
        <begin position="481"/>
        <end position="501"/>
    </location>
</feature>
<feature type="transmembrane region" description="Helical" evidence="1">
    <location>
        <begin position="526"/>
        <end position="546"/>
    </location>
</feature>
<feature type="transmembrane region" description="Helical" evidence="1">
    <location>
        <begin position="572"/>
        <end position="592"/>
    </location>
</feature>
<feature type="transmembrane region" description="Helical" evidence="1">
    <location>
        <begin position="609"/>
        <end position="629"/>
    </location>
</feature>
<dbReference type="EMBL" id="CP000112">
    <property type="protein sequence ID" value="ABB38075.1"/>
    <property type="molecule type" value="Genomic_DNA"/>
</dbReference>
<dbReference type="RefSeq" id="WP_011367273.1">
    <property type="nucleotide sequence ID" value="NC_007519.1"/>
</dbReference>
<dbReference type="SMR" id="Q312S1"/>
<dbReference type="STRING" id="207559.Dde_1274"/>
<dbReference type="KEGG" id="dde:Dde_1274"/>
<dbReference type="eggNOG" id="COG1593">
    <property type="taxonomic scope" value="Bacteria"/>
</dbReference>
<dbReference type="eggNOG" id="COG3090">
    <property type="taxonomic scope" value="Bacteria"/>
</dbReference>
<dbReference type="HOGENOM" id="CLU_019824_4_1_7"/>
<dbReference type="UniPathway" id="UPA00338"/>
<dbReference type="Proteomes" id="UP000002710">
    <property type="component" value="Chromosome"/>
</dbReference>
<dbReference type="GO" id="GO:0005886">
    <property type="term" value="C:plasma membrane"/>
    <property type="evidence" value="ECO:0007669"/>
    <property type="project" value="UniProtKB-SubCell"/>
</dbReference>
<dbReference type="GO" id="GO:0022857">
    <property type="term" value="F:transmembrane transporter activity"/>
    <property type="evidence" value="ECO:0007669"/>
    <property type="project" value="TreeGrafter"/>
</dbReference>
<dbReference type="GO" id="GO:0046306">
    <property type="term" value="P:alkanesulfonate catabolic process"/>
    <property type="evidence" value="ECO:0007669"/>
    <property type="project" value="UniProtKB-UniPathway"/>
</dbReference>
<dbReference type="InterPro" id="IPR010656">
    <property type="entry name" value="DctM"/>
</dbReference>
<dbReference type="InterPro" id="IPR055348">
    <property type="entry name" value="DctQ"/>
</dbReference>
<dbReference type="InterPro" id="IPR004681">
    <property type="entry name" value="TRAP_DctM"/>
</dbReference>
<dbReference type="NCBIfam" id="TIGR00786">
    <property type="entry name" value="dctM"/>
    <property type="match status" value="1"/>
</dbReference>
<dbReference type="PANTHER" id="PTHR33362:SF5">
    <property type="entry name" value="C4-DICARBOXYLATE TRAP TRANSPORTER LARGE PERMEASE PROTEIN DCTM"/>
    <property type="match status" value="1"/>
</dbReference>
<dbReference type="PANTHER" id="PTHR33362">
    <property type="entry name" value="SIALIC ACID TRAP TRANSPORTER PERMEASE PROTEIN SIAT-RELATED"/>
    <property type="match status" value="1"/>
</dbReference>
<dbReference type="Pfam" id="PF06808">
    <property type="entry name" value="DctM"/>
    <property type="match status" value="1"/>
</dbReference>
<dbReference type="Pfam" id="PF04290">
    <property type="entry name" value="DctQ"/>
    <property type="match status" value="1"/>
</dbReference>
<protein>
    <recommendedName>
        <fullName evidence="5">Isethionate TRAP transporter permease protein DctMQ</fullName>
    </recommendedName>
    <alternativeName>
        <fullName evidence="3">TRAP transporter, fused DctMQ subunit</fullName>
    </alternativeName>
</protein>
<accession>Q312S1</accession>
<comment type="function">
    <text evidence="2">Part of the tripartite ATP-independent periplasmic (TRAP) transport system DctPQM involved in the uptake of isethionate (2-hydroxyethanesulfonate), which is then catabolized by enzymes encoded by adjacent genes in the locus. Thereby is involved in an anaerobic respiration pathway that converts the sulfonate isethionate to ammonia, acetate and sulfide.</text>
</comment>
<comment type="pathway">
    <text evidence="2">Organosulfur degradation; alkanesulfonate degradation.</text>
</comment>
<comment type="subunit">
    <text evidence="5">The complex comprises the periplasmic solute receptor protein DctP, and the fused transmembrane protein DctMQ.</text>
</comment>
<comment type="subcellular location">
    <subcellularLocation>
        <location evidence="4">Cell inner membrane</location>
        <topology evidence="1">Multi-pass membrane protein</topology>
    </subcellularLocation>
</comment>
<comment type="disruption phenotype">
    <text evidence="2">Cells lacking this gene lose the ability to grow with isethionate as the terminal electron acceptor.</text>
</comment>
<comment type="similarity">
    <text evidence="4">In the N-terminal section; belongs to the TRAP transporter small permease family.</text>
</comment>
<comment type="similarity">
    <text evidence="4">In the C-terminal section; belongs to the TRAP transporter large permease family.</text>
</comment>
<gene>
    <name evidence="3" type="primary">dctMQ</name>
    <name evidence="6" type="ordered locus">Dde_1274</name>
</gene>